<gene>
    <name evidence="1" type="primary">rpsH</name>
    <name type="ordered locus">Pnap_0334</name>
</gene>
<evidence type="ECO:0000255" key="1">
    <source>
        <dbReference type="HAMAP-Rule" id="MF_01302"/>
    </source>
</evidence>
<evidence type="ECO:0000305" key="2"/>
<reference key="1">
    <citation type="journal article" date="2009" name="Environ. Microbiol.">
        <title>The genome of Polaromonas naphthalenivorans strain CJ2, isolated from coal tar-contaminated sediment, reveals physiological and metabolic versatility and evolution through extensive horizontal gene transfer.</title>
        <authorList>
            <person name="Yagi J.M."/>
            <person name="Sims D."/>
            <person name="Brettin T."/>
            <person name="Bruce D."/>
            <person name="Madsen E.L."/>
        </authorList>
    </citation>
    <scope>NUCLEOTIDE SEQUENCE [LARGE SCALE GENOMIC DNA]</scope>
    <source>
        <strain>CJ2</strain>
    </source>
</reference>
<sequence length="131" mass="14100">MSMSDPIADMLTRIRNAQMVEKAVVLVPSSKVKVAIAQVLKDEGYIDGFSVKANDGKPQLEIALKYYAGRPVIERIERVSRPGLRVYKGHGAIPQVMNGLGVAIVTTPQGVMTDRKARATGTGGEVLCYVA</sequence>
<dbReference type="EMBL" id="CP000529">
    <property type="protein sequence ID" value="ABM35657.1"/>
    <property type="molecule type" value="Genomic_DNA"/>
</dbReference>
<dbReference type="RefSeq" id="WP_011799763.1">
    <property type="nucleotide sequence ID" value="NC_008781.1"/>
</dbReference>
<dbReference type="SMR" id="A1VJ29"/>
<dbReference type="STRING" id="365044.Pnap_0334"/>
<dbReference type="KEGG" id="pna:Pnap_0334"/>
<dbReference type="eggNOG" id="COG0096">
    <property type="taxonomic scope" value="Bacteria"/>
</dbReference>
<dbReference type="HOGENOM" id="CLU_098428_0_0_4"/>
<dbReference type="OrthoDB" id="9802617at2"/>
<dbReference type="Proteomes" id="UP000000644">
    <property type="component" value="Chromosome"/>
</dbReference>
<dbReference type="GO" id="GO:1990904">
    <property type="term" value="C:ribonucleoprotein complex"/>
    <property type="evidence" value="ECO:0007669"/>
    <property type="project" value="UniProtKB-KW"/>
</dbReference>
<dbReference type="GO" id="GO:0005840">
    <property type="term" value="C:ribosome"/>
    <property type="evidence" value="ECO:0007669"/>
    <property type="project" value="UniProtKB-KW"/>
</dbReference>
<dbReference type="GO" id="GO:0019843">
    <property type="term" value="F:rRNA binding"/>
    <property type="evidence" value="ECO:0007669"/>
    <property type="project" value="UniProtKB-UniRule"/>
</dbReference>
<dbReference type="GO" id="GO:0003735">
    <property type="term" value="F:structural constituent of ribosome"/>
    <property type="evidence" value="ECO:0007669"/>
    <property type="project" value="InterPro"/>
</dbReference>
<dbReference type="GO" id="GO:0006412">
    <property type="term" value="P:translation"/>
    <property type="evidence" value="ECO:0007669"/>
    <property type="project" value="UniProtKB-UniRule"/>
</dbReference>
<dbReference type="FunFam" id="3.30.1370.30:FF:000002">
    <property type="entry name" value="30S ribosomal protein S8"/>
    <property type="match status" value="1"/>
</dbReference>
<dbReference type="FunFam" id="3.30.1490.10:FF:000001">
    <property type="entry name" value="30S ribosomal protein S8"/>
    <property type="match status" value="1"/>
</dbReference>
<dbReference type="Gene3D" id="3.30.1370.30">
    <property type="match status" value="1"/>
</dbReference>
<dbReference type="Gene3D" id="3.30.1490.10">
    <property type="match status" value="1"/>
</dbReference>
<dbReference type="HAMAP" id="MF_01302_B">
    <property type="entry name" value="Ribosomal_uS8_B"/>
    <property type="match status" value="1"/>
</dbReference>
<dbReference type="InterPro" id="IPR000630">
    <property type="entry name" value="Ribosomal_uS8"/>
</dbReference>
<dbReference type="InterPro" id="IPR047863">
    <property type="entry name" value="Ribosomal_uS8_CS"/>
</dbReference>
<dbReference type="InterPro" id="IPR035987">
    <property type="entry name" value="Ribosomal_uS8_sf"/>
</dbReference>
<dbReference type="NCBIfam" id="NF001109">
    <property type="entry name" value="PRK00136.1"/>
    <property type="match status" value="1"/>
</dbReference>
<dbReference type="PANTHER" id="PTHR11758">
    <property type="entry name" value="40S RIBOSOMAL PROTEIN S15A"/>
    <property type="match status" value="1"/>
</dbReference>
<dbReference type="Pfam" id="PF00410">
    <property type="entry name" value="Ribosomal_S8"/>
    <property type="match status" value="1"/>
</dbReference>
<dbReference type="SUPFAM" id="SSF56047">
    <property type="entry name" value="Ribosomal protein S8"/>
    <property type="match status" value="1"/>
</dbReference>
<dbReference type="PROSITE" id="PS00053">
    <property type="entry name" value="RIBOSOMAL_S8"/>
    <property type="match status" value="1"/>
</dbReference>
<protein>
    <recommendedName>
        <fullName evidence="1">Small ribosomal subunit protein uS8</fullName>
    </recommendedName>
    <alternativeName>
        <fullName evidence="2">30S ribosomal protein S8</fullName>
    </alternativeName>
</protein>
<name>RS8_POLNA</name>
<accession>A1VJ29</accession>
<keyword id="KW-1185">Reference proteome</keyword>
<keyword id="KW-0687">Ribonucleoprotein</keyword>
<keyword id="KW-0689">Ribosomal protein</keyword>
<keyword id="KW-0694">RNA-binding</keyword>
<keyword id="KW-0699">rRNA-binding</keyword>
<organism>
    <name type="scientific">Polaromonas naphthalenivorans (strain CJ2)</name>
    <dbReference type="NCBI Taxonomy" id="365044"/>
    <lineage>
        <taxon>Bacteria</taxon>
        <taxon>Pseudomonadati</taxon>
        <taxon>Pseudomonadota</taxon>
        <taxon>Betaproteobacteria</taxon>
        <taxon>Burkholderiales</taxon>
        <taxon>Comamonadaceae</taxon>
        <taxon>Polaromonas</taxon>
    </lineage>
</organism>
<feature type="chain" id="PRO_0000290896" description="Small ribosomal subunit protein uS8">
    <location>
        <begin position="1"/>
        <end position="131"/>
    </location>
</feature>
<proteinExistence type="inferred from homology"/>
<comment type="function">
    <text evidence="1">One of the primary rRNA binding proteins, it binds directly to 16S rRNA central domain where it helps coordinate assembly of the platform of the 30S subunit.</text>
</comment>
<comment type="subunit">
    <text evidence="1">Part of the 30S ribosomal subunit. Contacts proteins S5 and S12.</text>
</comment>
<comment type="similarity">
    <text evidence="1">Belongs to the universal ribosomal protein uS8 family.</text>
</comment>